<gene>
    <name evidence="1" type="primary">psbC</name>
</gene>
<accession>Q08684</accession>
<protein>
    <recommendedName>
        <fullName evidence="1">Photosystem II CP43 reaction center protein</fullName>
    </recommendedName>
    <alternativeName>
        <fullName evidence="1">PSII 43 kDa protein</fullName>
    </alternativeName>
    <alternativeName>
        <fullName evidence="1">Protein CP-43</fullName>
    </alternativeName>
</protein>
<comment type="function">
    <text evidence="1">One of the components of the core complex of photosystem II (PSII). It binds chlorophyll and helps catalyze the primary light-induced photochemical processes of PSII. PSII is a light-driven water:plastoquinone oxidoreductase, using light energy to abstract electrons from H(2)O, generating O(2) and a proton gradient subsequently used for ATP formation.</text>
</comment>
<comment type="cofactor">
    <text evidence="1">Binds multiple chlorophylls and provides some of the ligands for the Ca-4Mn-5O cluster of the oxygen-evolving complex. It may also provide a ligand for a Cl- that is required for oxygen evolution. PSII binds additional chlorophylls, carotenoids and specific lipids.</text>
</comment>
<comment type="subunit">
    <text evidence="1">PSII is composed of 1 copy each of membrane proteins PsbA, PsbB, PsbC, PsbD, PsbE, PsbF, PsbH, PsbI, PsbJ, PsbK, PsbL, PsbM, PsbT, PsbX, PsbY, PsbZ, Psb30/Ycf12, at least 3 peripheral proteins of the oxygen-evolving complex and a large number of cofactors. It forms dimeric complexes.</text>
</comment>
<comment type="subcellular location">
    <subcellularLocation>
        <location evidence="1">Plastid</location>
        <location evidence="1">Chloroplast thylakoid membrane</location>
        <topology evidence="1">Multi-pass membrane protein</topology>
    </subcellularLocation>
</comment>
<comment type="similarity">
    <text evidence="1">Belongs to the PsbB/PsbC family. PsbC subfamily.</text>
</comment>
<dbReference type="EMBL" id="M90639">
    <property type="protein sequence ID" value="AAA84148.1"/>
    <property type="molecule type" value="Genomic_DNA"/>
</dbReference>
<dbReference type="PIR" id="S41480">
    <property type="entry name" value="S41480"/>
</dbReference>
<dbReference type="SMR" id="Q08684"/>
<dbReference type="GO" id="GO:0009535">
    <property type="term" value="C:chloroplast thylakoid membrane"/>
    <property type="evidence" value="ECO:0007669"/>
    <property type="project" value="UniProtKB-SubCell"/>
</dbReference>
<dbReference type="GO" id="GO:0009523">
    <property type="term" value="C:photosystem II"/>
    <property type="evidence" value="ECO:0007669"/>
    <property type="project" value="UniProtKB-KW"/>
</dbReference>
<dbReference type="GO" id="GO:0016168">
    <property type="term" value="F:chlorophyll binding"/>
    <property type="evidence" value="ECO:0007669"/>
    <property type="project" value="UniProtKB-UniRule"/>
</dbReference>
<dbReference type="GO" id="GO:0045156">
    <property type="term" value="F:electron transporter, transferring electrons within the cyclic electron transport pathway of photosynthesis activity"/>
    <property type="evidence" value="ECO:0007669"/>
    <property type="project" value="InterPro"/>
</dbReference>
<dbReference type="GO" id="GO:0046872">
    <property type="term" value="F:metal ion binding"/>
    <property type="evidence" value="ECO:0007669"/>
    <property type="project" value="UniProtKB-KW"/>
</dbReference>
<dbReference type="GO" id="GO:0009772">
    <property type="term" value="P:photosynthetic electron transport in photosystem II"/>
    <property type="evidence" value="ECO:0007669"/>
    <property type="project" value="InterPro"/>
</dbReference>
<dbReference type="FunFam" id="1.10.10.670:FF:000001">
    <property type="entry name" value="Photosystem II CP43 reaction center protein"/>
    <property type="match status" value="1"/>
</dbReference>
<dbReference type="Gene3D" id="1.10.10.670">
    <property type="entry name" value="photosystem ii from thermosynechococcus elongatus"/>
    <property type="match status" value="1"/>
</dbReference>
<dbReference type="HAMAP" id="MF_01496">
    <property type="entry name" value="PSII_PsbC_CP43"/>
    <property type="match status" value="1"/>
</dbReference>
<dbReference type="InterPro" id="IPR000932">
    <property type="entry name" value="PS_antenna-like"/>
</dbReference>
<dbReference type="InterPro" id="IPR036001">
    <property type="entry name" value="PS_II_antenna-like_sf"/>
</dbReference>
<dbReference type="InterPro" id="IPR005869">
    <property type="entry name" value="PSII_PsbC"/>
</dbReference>
<dbReference type="InterPro" id="IPR044900">
    <property type="entry name" value="PSII_PsbC_sf"/>
</dbReference>
<dbReference type="NCBIfam" id="TIGR01153">
    <property type="entry name" value="psbC"/>
    <property type="match status" value="1"/>
</dbReference>
<dbReference type="Pfam" id="PF00421">
    <property type="entry name" value="PSII"/>
    <property type="match status" value="1"/>
</dbReference>
<dbReference type="SUPFAM" id="SSF161077">
    <property type="entry name" value="Photosystem II antenna protein-like"/>
    <property type="match status" value="1"/>
</dbReference>
<name>PSBC_CHLMO</name>
<feature type="propeptide" id="PRO_0000431123" evidence="1">
    <location>
        <begin position="1"/>
        <end position="2"/>
    </location>
</feature>
<feature type="chain" id="PRO_0000077508" description="Photosystem II CP43 reaction center protein" evidence="1">
    <location>
        <begin position="3"/>
        <end position="461"/>
    </location>
</feature>
<feature type="transmembrane region" description="Helical" evidence="1">
    <location>
        <begin position="57"/>
        <end position="81"/>
    </location>
</feature>
<feature type="transmembrane region" description="Helical" evidence="1">
    <location>
        <begin position="122"/>
        <end position="143"/>
    </location>
</feature>
<feature type="transmembrane region" description="Helical" evidence="1">
    <location>
        <begin position="166"/>
        <end position="188"/>
    </location>
</feature>
<feature type="transmembrane region" description="Helical" evidence="1">
    <location>
        <begin position="243"/>
        <end position="263"/>
    </location>
</feature>
<feature type="transmembrane region" description="Helical" evidence="1">
    <location>
        <begin position="279"/>
        <end position="300"/>
    </location>
</feature>
<feature type="transmembrane region" description="Helical" evidence="1">
    <location>
        <begin position="435"/>
        <end position="459"/>
    </location>
</feature>
<feature type="binding site" evidence="1">
    <location>
        <position position="355"/>
    </location>
    <ligand>
        <name>[CaMn4O5] cluster</name>
        <dbReference type="ChEBI" id="CHEBI:189552"/>
    </ligand>
</feature>
<feature type="modified residue" description="N-acetylthreonine" evidence="1">
    <location>
        <position position="3"/>
    </location>
</feature>
<feature type="modified residue" description="Phosphothreonine" evidence="1">
    <location>
        <position position="3"/>
    </location>
</feature>
<reference key="1">
    <citation type="journal article" date="1993" name="Nucleic Acids Res.">
        <title>Group I introns interrupt the chloroplast psaB and psbC and the mitochondrial rrnL gene in Chlamydomonas.</title>
        <authorList>
            <person name="Turmel M."/>
            <person name="Mercier J.P."/>
            <person name="Cote M.J.J."/>
        </authorList>
    </citation>
    <scope>NUCLEOTIDE SEQUENCE [GENOMIC DNA]</scope>
</reference>
<geneLocation type="chloroplast"/>
<evidence type="ECO:0000255" key="1">
    <source>
        <dbReference type="HAMAP-Rule" id="MF_01496"/>
    </source>
</evidence>
<organism>
    <name type="scientific">Chlamydomonas moewusii</name>
    <name type="common">Chlamydomonas eugametos</name>
    <dbReference type="NCBI Taxonomy" id="3054"/>
    <lineage>
        <taxon>Eukaryota</taxon>
        <taxon>Viridiplantae</taxon>
        <taxon>Chlorophyta</taxon>
        <taxon>core chlorophytes</taxon>
        <taxon>Chlorophyceae</taxon>
        <taxon>CS clade</taxon>
        <taxon>Chlamydomonadales</taxon>
        <taxon>Chlamydomonadaceae</taxon>
        <taxon>Chlamydomonas</taxon>
    </lineage>
</organism>
<sequence length="461" mass="50559">METLFNGTLTVGGRDQETTGFAWWAGNARLINLSGKLLGAHVAHAGLIVFWAGAMNLFEVSHFVPEKPMYEQGLILLPHIASLGYGVGPGGEVIDTFPYFVSGVLHLISSAVLGFGGVYHSLIGPETLEESFPFFGYIWKDKNKMTSILGYHLIMLGCGAWLLVLKAMYFGGIYDTWAPGGGDVRIITNPTTNFATIFGYLLRSPFGGDGWICSVDNLEDIIGGHIWIGTLCIFGGIWHIYTTPWPWARRAFVWSGEAYLSYSLGAIATMGFIACCFSWFNNTAYPSEFYGPTGPEASQAQAFTFLVRDQRLGANVASAQGPTGLGKYLMRSPTGEIIFGGETMRFWDFRGPWCEPLRGPNGLDLNKLKNDIQPWQERRAAEYMTHAPLGSLNSVGGVATEINAVNFVSPRSWLATSHFVLGFFFFVGHLWHAGRARAAAAGFEKGIDRVDEPVLSMRPLD</sequence>
<proteinExistence type="inferred from homology"/>
<keyword id="KW-0007">Acetylation</keyword>
<keyword id="KW-0148">Chlorophyll</keyword>
<keyword id="KW-0150">Chloroplast</keyword>
<keyword id="KW-0157">Chromophore</keyword>
<keyword id="KW-0464">Manganese</keyword>
<keyword id="KW-0472">Membrane</keyword>
<keyword id="KW-0479">Metal-binding</keyword>
<keyword id="KW-0597">Phosphoprotein</keyword>
<keyword id="KW-0602">Photosynthesis</keyword>
<keyword id="KW-0604">Photosystem II</keyword>
<keyword id="KW-0934">Plastid</keyword>
<keyword id="KW-0793">Thylakoid</keyword>
<keyword id="KW-0812">Transmembrane</keyword>
<keyword id="KW-1133">Transmembrane helix</keyword>